<evidence type="ECO:0000250" key="1"/>
<evidence type="ECO:0000255" key="2">
    <source>
        <dbReference type="PROSITE-ProRule" id="PRU00660"/>
    </source>
</evidence>
<evidence type="ECO:0000256" key="3">
    <source>
        <dbReference type="SAM" id="MobiDB-lite"/>
    </source>
</evidence>
<evidence type="ECO:0000269" key="4">
    <source>
    </source>
</evidence>
<evidence type="ECO:0000305" key="5"/>
<feature type="chain" id="PRO_0000428867" description="Dihydrofolate reductase HdrB">
    <location>
        <begin position="1"/>
        <end position="194"/>
    </location>
</feature>
<feature type="domain" description="DHFR" evidence="2">
    <location>
        <begin position="18"/>
        <end position="194"/>
    </location>
</feature>
<feature type="region of interest" description="Disordered" evidence="3">
    <location>
        <begin position="173"/>
        <end position="194"/>
    </location>
</feature>
<feature type="binding site" evidence="1">
    <location>
        <position position="24"/>
    </location>
    <ligand>
        <name>NADP(+)</name>
        <dbReference type="ChEBI" id="CHEBI:58349"/>
    </ligand>
</feature>
<feature type="binding site" evidence="1">
    <location>
        <begin position="30"/>
        <end position="36"/>
    </location>
    <ligand>
        <name>NADP(+)</name>
        <dbReference type="ChEBI" id="CHEBI:58349"/>
    </ligand>
</feature>
<feature type="binding site" evidence="1">
    <location>
        <position position="44"/>
    </location>
    <ligand>
        <name>substrate</name>
    </ligand>
</feature>
<feature type="binding site" evidence="1">
    <location>
        <begin position="62"/>
        <end position="63"/>
    </location>
    <ligand>
        <name>NADP(+)</name>
        <dbReference type="ChEBI" id="CHEBI:58349"/>
    </ligand>
</feature>
<feature type="binding site" evidence="1">
    <location>
        <position position="69"/>
    </location>
    <ligand>
        <name>substrate</name>
    </ligand>
</feature>
<feature type="binding site" evidence="1">
    <location>
        <position position="78"/>
    </location>
    <ligand>
        <name>substrate</name>
    </ligand>
</feature>
<feature type="binding site" evidence="1">
    <location>
        <begin position="84"/>
        <end position="85"/>
    </location>
    <ligand>
        <name>NADP(+)</name>
        <dbReference type="ChEBI" id="CHEBI:58349"/>
    </ligand>
</feature>
<feature type="binding site" evidence="1">
    <location>
        <begin position="123"/>
        <end position="130"/>
    </location>
    <ligand>
        <name>NADP(+)</name>
        <dbReference type="ChEBI" id="CHEBI:58349"/>
    </ligand>
</feature>
<feature type="binding site" evidence="1">
    <location>
        <position position="141"/>
    </location>
    <ligand>
        <name>substrate</name>
    </ligand>
</feature>
<protein>
    <recommendedName>
        <fullName>Dihydrofolate reductase HdrB</fullName>
        <shortName>DHFR B</shortName>
        <shortName>hDHFR-2</shortName>
        <ecNumber>1.5.1.3</ecNumber>
    </recommendedName>
</protein>
<name>DYRB_HALVO</name>
<proteinExistence type="evidence at protein level"/>
<accession>Q9UWQ4</accession>
<reference key="1">
    <citation type="journal article" date="2000" name="Mol. Microbiol.">
        <title>The extremely halophilic archaeon Haloferax volcanii has two very different dihydrofolate reductases.</title>
        <authorList>
            <person name="Ortenberg R."/>
            <person name="Rozenblatt-Rosen O."/>
            <person name="Mevarech M."/>
        </authorList>
    </citation>
    <scope>NUCLEOTIDE SEQUENCE [GENOMIC DNA]</scope>
    <scope>FUNCTION</scope>
    <scope>CATALYTIC ACTIVITY</scope>
    <scope>ACTIVITY REGULATION</scope>
    <scope>BIOPHYSICOCHEMICAL PROPERTIES</scope>
    <scope>DISRUPTION PHENOTYPE</scope>
    <source>
        <strain>WR341</strain>
    </source>
</reference>
<sequence>MSGEELSGSETEGDAAVRFVLVAAVADNRVIGRDGTMPWHLPEDLKQFKRTTTGHPVVMGRKTYESIARQLGGPLPERHSVLLTTRDLDLPEGAEAVESVESAVAAAEDAADEMGVETVYVVGGATVYEQFLGRAAGLVLTELDAAHEGDTRFPEWDRGKWVETDRDDRDGFSFVTYERKQPAAADRGAEESDE</sequence>
<keyword id="KW-0521">NADP</keyword>
<keyword id="KW-0554">One-carbon metabolism</keyword>
<keyword id="KW-0560">Oxidoreductase</keyword>
<dbReference type="EC" id="1.5.1.3"/>
<dbReference type="EMBL" id="AF124982">
    <property type="protein sequence ID" value="AAF23265.1"/>
    <property type="molecule type" value="Genomic_DNA"/>
</dbReference>
<dbReference type="SMR" id="Q9UWQ4"/>
<dbReference type="UniPathway" id="UPA00077">
    <property type="reaction ID" value="UER00158"/>
</dbReference>
<dbReference type="GO" id="GO:0005829">
    <property type="term" value="C:cytosol"/>
    <property type="evidence" value="ECO:0007669"/>
    <property type="project" value="TreeGrafter"/>
</dbReference>
<dbReference type="GO" id="GO:0004146">
    <property type="term" value="F:dihydrofolate reductase activity"/>
    <property type="evidence" value="ECO:0007669"/>
    <property type="project" value="UniProtKB-EC"/>
</dbReference>
<dbReference type="GO" id="GO:0050661">
    <property type="term" value="F:NADP binding"/>
    <property type="evidence" value="ECO:0007669"/>
    <property type="project" value="InterPro"/>
</dbReference>
<dbReference type="GO" id="GO:0046452">
    <property type="term" value="P:dihydrofolate metabolic process"/>
    <property type="evidence" value="ECO:0007669"/>
    <property type="project" value="TreeGrafter"/>
</dbReference>
<dbReference type="GO" id="GO:0046655">
    <property type="term" value="P:folic acid metabolic process"/>
    <property type="evidence" value="ECO:0007669"/>
    <property type="project" value="TreeGrafter"/>
</dbReference>
<dbReference type="GO" id="GO:0006730">
    <property type="term" value="P:one-carbon metabolic process"/>
    <property type="evidence" value="ECO:0007669"/>
    <property type="project" value="UniProtKB-KW"/>
</dbReference>
<dbReference type="GO" id="GO:0046654">
    <property type="term" value="P:tetrahydrofolate biosynthetic process"/>
    <property type="evidence" value="ECO:0007669"/>
    <property type="project" value="UniProtKB-UniPathway"/>
</dbReference>
<dbReference type="CDD" id="cd00209">
    <property type="entry name" value="DHFR"/>
    <property type="match status" value="1"/>
</dbReference>
<dbReference type="Gene3D" id="3.40.430.10">
    <property type="entry name" value="Dihydrofolate Reductase, subunit A"/>
    <property type="match status" value="1"/>
</dbReference>
<dbReference type="InterPro" id="IPR012259">
    <property type="entry name" value="DHFR"/>
</dbReference>
<dbReference type="InterPro" id="IPR024072">
    <property type="entry name" value="DHFR-like_dom_sf"/>
</dbReference>
<dbReference type="InterPro" id="IPR017925">
    <property type="entry name" value="DHFR_CS"/>
</dbReference>
<dbReference type="InterPro" id="IPR001796">
    <property type="entry name" value="DHFR_dom"/>
</dbReference>
<dbReference type="PANTHER" id="PTHR48069">
    <property type="entry name" value="DIHYDROFOLATE REDUCTASE"/>
    <property type="match status" value="1"/>
</dbReference>
<dbReference type="PANTHER" id="PTHR48069:SF3">
    <property type="entry name" value="DIHYDROFOLATE REDUCTASE"/>
    <property type="match status" value="1"/>
</dbReference>
<dbReference type="Pfam" id="PF00186">
    <property type="entry name" value="DHFR_1"/>
    <property type="match status" value="1"/>
</dbReference>
<dbReference type="PIRSF" id="PIRSF000194">
    <property type="entry name" value="DHFR"/>
    <property type="match status" value="1"/>
</dbReference>
<dbReference type="PRINTS" id="PR00070">
    <property type="entry name" value="DHFR"/>
</dbReference>
<dbReference type="SUPFAM" id="SSF53597">
    <property type="entry name" value="Dihydrofolate reductase-like"/>
    <property type="match status" value="1"/>
</dbReference>
<dbReference type="PROSITE" id="PS00075">
    <property type="entry name" value="DHFR_1"/>
    <property type="match status" value="1"/>
</dbReference>
<dbReference type="PROSITE" id="PS51330">
    <property type="entry name" value="DHFR_2"/>
    <property type="match status" value="1"/>
</dbReference>
<organism>
    <name type="scientific">Haloferax volcanii</name>
    <name type="common">Halobacterium volcanii</name>
    <dbReference type="NCBI Taxonomy" id="2246"/>
    <lineage>
        <taxon>Archaea</taxon>
        <taxon>Methanobacteriati</taxon>
        <taxon>Methanobacteriota</taxon>
        <taxon>Stenosarchaea group</taxon>
        <taxon>Halobacteria</taxon>
        <taxon>Halobacteriales</taxon>
        <taxon>Haloferacaceae</taxon>
        <taxon>Haloferax</taxon>
    </lineage>
</organism>
<comment type="function">
    <text evidence="4">Key enzyme in folate metabolism. Catalyzes an essential reaction for de novo glycine and purine synthesis, and for DNA precursor synthesis.</text>
</comment>
<comment type="catalytic activity">
    <reaction evidence="2 4">
        <text>(6S)-5,6,7,8-tetrahydrofolate + NADP(+) = 7,8-dihydrofolate + NADPH + H(+)</text>
        <dbReference type="Rhea" id="RHEA:15009"/>
        <dbReference type="ChEBI" id="CHEBI:15378"/>
        <dbReference type="ChEBI" id="CHEBI:57451"/>
        <dbReference type="ChEBI" id="CHEBI:57453"/>
        <dbReference type="ChEBI" id="CHEBI:57783"/>
        <dbReference type="ChEBI" id="CHEBI:58349"/>
        <dbReference type="EC" id="1.5.1.3"/>
    </reaction>
</comment>
<comment type="activity regulation">
    <text evidence="4">Maximum activity at KCl concentration of 0.5 M and activity decreases with increasing concentration of KCl.</text>
</comment>
<comment type="biophysicochemical properties">
    <phDependence>
        <text evidence="4">Optimum pH is 6.0.</text>
    </phDependence>
</comment>
<comment type="pathway">
    <text>Cofactor biosynthesis; tetrahydrofolate biosynthesis; 5,6,7,8-tetrahydrofolate from 7,8-dihydrofolate: step 1/1.</text>
</comment>
<comment type="disruption phenotype">
    <text evidence="4">Thymidine auxotrophy.</text>
</comment>
<comment type="similarity">
    <text evidence="5">Belongs to the dihydrofolate reductase family.</text>
</comment>
<gene>
    <name type="primary">hdrB</name>
</gene>